<feature type="chain" id="PRO_0000458888" description="Spore coat protein CotA">
    <location>
        <begin position="1"/>
        <end position="305"/>
    </location>
</feature>
<proteinExistence type="evidence at protein level"/>
<protein>
    <recommendedName>
        <fullName evidence="6">Spore coat protein CotA</fullName>
    </recommendedName>
</protein>
<dbReference type="EMBL" id="AM180355">
    <property type="protein sequence ID" value="CAJ68478.1"/>
    <property type="molecule type" value="Genomic_DNA"/>
</dbReference>
<dbReference type="RefSeq" id="WP_003436448.1">
    <property type="nucleotide sequence ID" value="NZ_JAUPES010000013.1"/>
</dbReference>
<dbReference type="RefSeq" id="YP_001088114.1">
    <property type="nucleotide sequence ID" value="NC_009089.1"/>
</dbReference>
<dbReference type="STRING" id="272563.CD630_16130"/>
<dbReference type="EnsemblBacteria" id="CAJ68478">
    <property type="protein sequence ID" value="CAJ68478"/>
    <property type="gene ID" value="CD630_16130"/>
</dbReference>
<dbReference type="KEGG" id="cdf:CD630_16130"/>
<dbReference type="KEGG" id="pdc:CDIF630_01789"/>
<dbReference type="PATRIC" id="fig|272563.120.peg.1690"/>
<dbReference type="eggNOG" id="ENOG50323IF">
    <property type="taxonomic scope" value="Bacteria"/>
</dbReference>
<dbReference type="OrthoDB" id="1757269at2"/>
<dbReference type="BioCyc" id="PDIF272563:G12WB-1752-MONOMER"/>
<dbReference type="Proteomes" id="UP000001978">
    <property type="component" value="Chromosome"/>
</dbReference>
<dbReference type="GO" id="GO:0030435">
    <property type="term" value="P:sporulation resulting in formation of a cellular spore"/>
    <property type="evidence" value="ECO:0007669"/>
    <property type="project" value="UniProtKB-KW"/>
</dbReference>
<dbReference type="InterPro" id="IPR048150">
    <property type="entry name" value="Spore_exo_CotA-like"/>
</dbReference>
<dbReference type="NCBIfam" id="NF041648">
    <property type="entry name" value="spore_exo_CotA"/>
    <property type="match status" value="1"/>
</dbReference>
<evidence type="ECO:0000269" key="1">
    <source>
    </source>
</evidence>
<evidence type="ECO:0000269" key="2">
    <source>
    </source>
</evidence>
<evidence type="ECO:0000269" key="3">
    <source>
    </source>
</evidence>
<evidence type="ECO:0000269" key="4">
    <source>
    </source>
</evidence>
<evidence type="ECO:0000303" key="5">
    <source>
    </source>
</evidence>
<evidence type="ECO:0000303" key="6">
    <source>
    </source>
</evidence>
<evidence type="ECO:0000312" key="7">
    <source>
        <dbReference type="EMBL" id="CAJ68478.1"/>
    </source>
</evidence>
<name>COTA_CLOD6</name>
<accession>Q186G8</accession>
<gene>
    <name evidence="5" type="primary">cotA</name>
    <name evidence="7" type="ordered locus">CD630_16130</name>
    <name evidence="7" type="ORF">CD1613</name>
</gene>
<comment type="function">
    <text evidence="2 4">Contributes to maintain proper thickness of the spore coat (PubMed:36296193). May contribute to the formation of polar appendages (PubMed:36296193). May play an important role in assembly of the outer layers of the spore coat (PubMed:23335421).</text>
</comment>
<comment type="subcellular location">
    <subcellularLocation>
        <location evidence="1 2 3">Spore coat</location>
    </subcellularLocation>
    <subcellularLocation>
        <location evidence="3">Spore</location>
        <location evidence="3">Perispore</location>
    </subcellularLocation>
    <text evidence="3">Mainly located in the spore coat (PubMed:25849250). Also present in the exosporium (or perispore) layer, the outermost surface of spores (PubMed:25849250).</text>
</comment>
<comment type="disruption phenotype">
    <text evidence="2 4">Inactivation of the gene produces changes in the ultrastructure of the spore (PubMed:36296193). In thick-exosporium spores, the absence of the gene leads to thickening of the coat (PubMed:36296193). Inactivation of the gene leads to a significant decrease of the spores with a polar appendage (PubMed:36296193). According to Permpoonpattana et al., disruption mutant exhibits a major structural defect in spore assembly, with a clear misassembly of the outermost layers of the spore coat (PubMed:23335421). However, Pizarro-Guajardo et al. demonstrated that mutant forms spores with a similar overall ultrastructure to the parental wild-type strain (PubMed:36296193).</text>
</comment>
<sequence>MENNKCREDFRFTQEYEEDYPNTNERYYENYQVADRYYNYPNKYKEPKIKQCCCKKSMREALELLRYDALRPFVNFNQFAFISDFFIVGANLVGIDLSAPPKDNLSGLDGTFERFSACNCDLIDIAGRVSYPIPVPLTLEGLINTIGTIPGVAELIALIDAVIPPTIDLGAILDAILAAIIDFILAASTPLANVDLASLCNLKAVAFDITPADYEDFIASLGYYLDKKHYKECNCNCDCDDCCCNKGILDNLYMSNINNQVTVVAGSLVLTGVEVLGKKNDVIVLGNSNDSRIYFVCVDSIDYIA</sequence>
<organism>
    <name type="scientific">Clostridioides difficile (strain 630)</name>
    <name type="common">Peptoclostridium difficile</name>
    <dbReference type="NCBI Taxonomy" id="272563"/>
    <lineage>
        <taxon>Bacteria</taxon>
        <taxon>Bacillati</taxon>
        <taxon>Bacillota</taxon>
        <taxon>Clostridia</taxon>
        <taxon>Peptostreptococcales</taxon>
        <taxon>Peptostreptococcaceae</taxon>
        <taxon>Clostridioides</taxon>
    </lineage>
</organism>
<reference key="1">
    <citation type="journal article" date="2006" name="Nat. Genet.">
        <title>The multidrug-resistant human pathogen Clostridium difficile has a highly mobile, mosaic genome.</title>
        <authorList>
            <person name="Sebaihia M."/>
            <person name="Wren B.W."/>
            <person name="Mullany P."/>
            <person name="Fairweather N.F."/>
            <person name="Minton N."/>
            <person name="Stabler R."/>
            <person name="Thomson N.R."/>
            <person name="Roberts A.P."/>
            <person name="Cerdeno-Tarraga A.M."/>
            <person name="Wang H."/>
            <person name="Holden M.T.G."/>
            <person name="Wright A."/>
            <person name="Churcher C."/>
            <person name="Quail M.A."/>
            <person name="Baker S."/>
            <person name="Bason N."/>
            <person name="Brooks K."/>
            <person name="Chillingworth T."/>
            <person name="Cronin A."/>
            <person name="Davis P."/>
            <person name="Dowd L."/>
            <person name="Fraser A."/>
            <person name="Feltwell T."/>
            <person name="Hance Z."/>
            <person name="Holroyd S."/>
            <person name="Jagels K."/>
            <person name="Moule S."/>
            <person name="Mungall K."/>
            <person name="Price C."/>
            <person name="Rabbinowitsch E."/>
            <person name="Sharp S."/>
            <person name="Simmonds M."/>
            <person name="Stevens K."/>
            <person name="Unwin L."/>
            <person name="Whithead S."/>
            <person name="Dupuy B."/>
            <person name="Dougan G."/>
            <person name="Barrell B."/>
            <person name="Parkhill J."/>
        </authorList>
    </citation>
    <scope>NUCLEOTIDE SEQUENCE [LARGE SCALE GENOMIC DNA]</scope>
    <source>
        <strain>630</strain>
    </source>
</reference>
<reference key="2">
    <citation type="journal article" date="2011" name="J. Bacteriol.">
        <title>Surface layers of Clostridium difficile endospores.</title>
        <authorList>
            <person name="Permpoonpattana P."/>
            <person name="Tolls E.H."/>
            <person name="Nadem R."/>
            <person name="Tan S."/>
            <person name="Brisson A."/>
            <person name="Cutting S.M."/>
        </authorList>
    </citation>
    <scope>IDENTIFICATION BY MASS SPECTROMETRY</scope>
    <scope>SUBCELLULAR LOCATION</scope>
    <source>
        <strain>630</strain>
    </source>
</reference>
<reference key="3">
    <citation type="journal article" date="2013" name="J. Bacteriol.">
        <title>Functional characterization of Clostridium difficile spore coat proteins.</title>
        <authorList>
            <person name="Permpoonpattana P."/>
            <person name="Phetcharaburanin J."/>
            <person name="Mikelsone A."/>
            <person name="Dembek M."/>
            <person name="Tan S."/>
            <person name="Brisson M.C."/>
            <person name="La Ragione R."/>
            <person name="Brisson A.R."/>
            <person name="Fairweather N."/>
            <person name="Hong H.A."/>
            <person name="Cutting S.M."/>
        </authorList>
    </citation>
    <scope>FUNCTION</scope>
    <scope>SUBCELLULAR LOCATION</scope>
    <scope>DISRUPTION PHENOTYPE</scope>
    <source>
        <strain>630</strain>
    </source>
</reference>
<reference key="4">
    <citation type="journal article" date="2015" name="J. Proteomics">
        <title>Protein composition of the outermost exosporium-like layer of Clostridium difficile 630 spores.</title>
        <authorList>
            <person name="Diaz-Gonzalez F."/>
            <person name="Milano M."/>
            <person name="Olguin-Araneda V."/>
            <person name="Pizarro-Cerda J."/>
            <person name="Castro-Cordova P."/>
            <person name="Tzeng S.C."/>
            <person name="Maier C.S."/>
            <person name="Sarker M.R."/>
            <person name="Paredes-Sabja D."/>
        </authorList>
    </citation>
    <scope>SUBCELLULAR LOCATION</scope>
    <source>
        <strain>630</strain>
    </source>
</reference>
<reference key="5">
    <citation type="journal article" date="2022" name="Microorganisms">
        <title>Role of the Spore Coat Proteins CotA and CotB, and the Spore Surface Protein CDIF630_02480, on the Surface Distribution of Exosporium Proteins in Clostridioides difficile 630 Spores.</title>
        <authorList>
            <person name="Montes-Bravo N."/>
            <person name="Romero-Rodriguez A."/>
            <person name="Garcia-Yunge J."/>
            <person name="Medina C."/>
            <person name="Pizarro-Guajardo M."/>
            <person name="Paredes-Sabja D."/>
        </authorList>
    </citation>
    <scope>FUNCTION</scope>
    <scope>DISRUPTION PHENOTYPE</scope>
    <source>
        <strain>630</strain>
    </source>
</reference>
<keyword id="KW-1185">Reference proteome</keyword>
<keyword id="KW-0749">Sporulation</keyword>